<accession>C4LF65</accession>
<proteinExistence type="inferred from homology"/>
<gene>
    <name evidence="1" type="primary">ureA</name>
    <name type="ordered locus">Tola_1621</name>
</gene>
<name>URE3_TOLAT</name>
<keyword id="KW-0963">Cytoplasm</keyword>
<keyword id="KW-0378">Hydrolase</keyword>
<keyword id="KW-1185">Reference proteome</keyword>
<comment type="catalytic activity">
    <reaction evidence="1">
        <text>urea + 2 H2O + H(+) = hydrogencarbonate + 2 NH4(+)</text>
        <dbReference type="Rhea" id="RHEA:20557"/>
        <dbReference type="ChEBI" id="CHEBI:15377"/>
        <dbReference type="ChEBI" id="CHEBI:15378"/>
        <dbReference type="ChEBI" id="CHEBI:16199"/>
        <dbReference type="ChEBI" id="CHEBI:17544"/>
        <dbReference type="ChEBI" id="CHEBI:28938"/>
        <dbReference type="EC" id="3.5.1.5"/>
    </reaction>
</comment>
<comment type="pathway">
    <text evidence="1">Nitrogen metabolism; urea degradation; CO(2) and NH(3) from urea (urease route): step 1/1.</text>
</comment>
<comment type="subunit">
    <text evidence="1">Heterotrimer of UreA (gamma), UreB (beta) and UreC (alpha) subunits. Three heterotrimers associate to form the active enzyme.</text>
</comment>
<comment type="subcellular location">
    <subcellularLocation>
        <location evidence="1">Cytoplasm</location>
    </subcellularLocation>
</comment>
<comment type="similarity">
    <text evidence="1">Belongs to the urease gamma subunit family.</text>
</comment>
<dbReference type="EC" id="3.5.1.5" evidence="1"/>
<dbReference type="EMBL" id="CP001616">
    <property type="protein sequence ID" value="ACQ93232.1"/>
    <property type="molecule type" value="Genomic_DNA"/>
</dbReference>
<dbReference type="RefSeq" id="WP_015878703.1">
    <property type="nucleotide sequence ID" value="NC_012691.1"/>
</dbReference>
<dbReference type="SMR" id="C4LF65"/>
<dbReference type="STRING" id="595494.Tola_1621"/>
<dbReference type="KEGG" id="tau:Tola_1621"/>
<dbReference type="eggNOG" id="COG0831">
    <property type="taxonomic scope" value="Bacteria"/>
</dbReference>
<dbReference type="HOGENOM" id="CLU_145825_1_0_6"/>
<dbReference type="OrthoDB" id="9797217at2"/>
<dbReference type="UniPathway" id="UPA00258">
    <property type="reaction ID" value="UER00370"/>
</dbReference>
<dbReference type="Proteomes" id="UP000009073">
    <property type="component" value="Chromosome"/>
</dbReference>
<dbReference type="GO" id="GO:0005737">
    <property type="term" value="C:cytoplasm"/>
    <property type="evidence" value="ECO:0007669"/>
    <property type="project" value="UniProtKB-SubCell"/>
</dbReference>
<dbReference type="GO" id="GO:0016151">
    <property type="term" value="F:nickel cation binding"/>
    <property type="evidence" value="ECO:0007669"/>
    <property type="project" value="InterPro"/>
</dbReference>
<dbReference type="GO" id="GO:0009039">
    <property type="term" value="F:urease activity"/>
    <property type="evidence" value="ECO:0007669"/>
    <property type="project" value="UniProtKB-UniRule"/>
</dbReference>
<dbReference type="GO" id="GO:0043419">
    <property type="term" value="P:urea catabolic process"/>
    <property type="evidence" value="ECO:0007669"/>
    <property type="project" value="UniProtKB-UniRule"/>
</dbReference>
<dbReference type="CDD" id="cd00390">
    <property type="entry name" value="Urease_gamma"/>
    <property type="match status" value="1"/>
</dbReference>
<dbReference type="Gene3D" id="3.30.280.10">
    <property type="entry name" value="Urease, gamma-like subunit"/>
    <property type="match status" value="1"/>
</dbReference>
<dbReference type="HAMAP" id="MF_00739">
    <property type="entry name" value="Urease_gamma"/>
    <property type="match status" value="1"/>
</dbReference>
<dbReference type="InterPro" id="IPR012010">
    <property type="entry name" value="Urease_gamma"/>
</dbReference>
<dbReference type="InterPro" id="IPR002026">
    <property type="entry name" value="Urease_gamma/gamma-beta_su"/>
</dbReference>
<dbReference type="InterPro" id="IPR036463">
    <property type="entry name" value="Urease_gamma_sf"/>
</dbReference>
<dbReference type="InterPro" id="IPR050069">
    <property type="entry name" value="Urease_subunit"/>
</dbReference>
<dbReference type="NCBIfam" id="NF009712">
    <property type="entry name" value="PRK13241.1"/>
    <property type="match status" value="1"/>
</dbReference>
<dbReference type="NCBIfam" id="TIGR00193">
    <property type="entry name" value="urease_gam"/>
    <property type="match status" value="1"/>
</dbReference>
<dbReference type="PANTHER" id="PTHR33569">
    <property type="entry name" value="UREASE"/>
    <property type="match status" value="1"/>
</dbReference>
<dbReference type="PANTHER" id="PTHR33569:SF1">
    <property type="entry name" value="UREASE"/>
    <property type="match status" value="1"/>
</dbReference>
<dbReference type="Pfam" id="PF00547">
    <property type="entry name" value="Urease_gamma"/>
    <property type="match status" value="1"/>
</dbReference>
<dbReference type="PIRSF" id="PIRSF001223">
    <property type="entry name" value="Urease_gamma"/>
    <property type="match status" value="1"/>
</dbReference>
<dbReference type="SUPFAM" id="SSF54111">
    <property type="entry name" value="Urease, gamma-subunit"/>
    <property type="match status" value="1"/>
</dbReference>
<evidence type="ECO:0000255" key="1">
    <source>
        <dbReference type="HAMAP-Rule" id="MF_00739"/>
    </source>
</evidence>
<reference key="1">
    <citation type="submission" date="2009-05" db="EMBL/GenBank/DDBJ databases">
        <title>Complete sequence of Tolumonas auensis DSM 9187.</title>
        <authorList>
            <consortium name="US DOE Joint Genome Institute"/>
            <person name="Lucas S."/>
            <person name="Copeland A."/>
            <person name="Lapidus A."/>
            <person name="Glavina del Rio T."/>
            <person name="Tice H."/>
            <person name="Bruce D."/>
            <person name="Goodwin L."/>
            <person name="Pitluck S."/>
            <person name="Chertkov O."/>
            <person name="Brettin T."/>
            <person name="Detter J.C."/>
            <person name="Han C."/>
            <person name="Larimer F."/>
            <person name="Land M."/>
            <person name="Hauser L."/>
            <person name="Kyrpides N."/>
            <person name="Mikhailova N."/>
            <person name="Spring S."/>
            <person name="Beller H."/>
        </authorList>
    </citation>
    <scope>NUCLEOTIDE SEQUENCE [LARGE SCALE GENOMIC DNA]</scope>
    <source>
        <strain>DSM 9187 / NBRC 110442 / TA 4</strain>
    </source>
</reference>
<sequence>MDLTPREKDKLLLFTAALVAERRKARGLKLNHPEAIALISAAILEGARDGRTVAELMNYGRTILTRDEVMDGIPEMIPDVQIEATFPDGTKLVTVHQPII</sequence>
<protein>
    <recommendedName>
        <fullName evidence="1">Urease subunit gamma</fullName>
        <ecNumber evidence="1">3.5.1.5</ecNumber>
    </recommendedName>
    <alternativeName>
        <fullName evidence="1">Urea amidohydrolase subunit gamma</fullName>
    </alternativeName>
</protein>
<feature type="chain" id="PRO_1000212805" description="Urease subunit gamma">
    <location>
        <begin position="1"/>
        <end position="100"/>
    </location>
</feature>
<organism>
    <name type="scientific">Tolumonas auensis (strain DSM 9187 / NBRC 110442 / TA 4)</name>
    <dbReference type="NCBI Taxonomy" id="595494"/>
    <lineage>
        <taxon>Bacteria</taxon>
        <taxon>Pseudomonadati</taxon>
        <taxon>Pseudomonadota</taxon>
        <taxon>Gammaproteobacteria</taxon>
        <taxon>Aeromonadales</taxon>
        <taxon>Aeromonadaceae</taxon>
        <taxon>Tolumonas</taxon>
    </lineage>
</organism>